<organism>
    <name type="scientific">Buchnera aphidicola subsp. Schizaphis graminum (strain Sg)</name>
    <dbReference type="NCBI Taxonomy" id="198804"/>
    <lineage>
        <taxon>Bacteria</taxon>
        <taxon>Pseudomonadati</taxon>
        <taxon>Pseudomonadota</taxon>
        <taxon>Gammaproteobacteria</taxon>
        <taxon>Enterobacterales</taxon>
        <taxon>Erwiniaceae</taxon>
        <taxon>Buchnera</taxon>
    </lineage>
</organism>
<dbReference type="EC" id="2.8.4.3" evidence="1"/>
<dbReference type="EMBL" id="AE013218">
    <property type="protein sequence ID" value="AAM67969.1"/>
    <property type="molecule type" value="Genomic_DNA"/>
</dbReference>
<dbReference type="RefSeq" id="WP_011053936.1">
    <property type="nucleotide sequence ID" value="NC_004061.1"/>
</dbReference>
<dbReference type="SMR" id="Q8K9C2"/>
<dbReference type="STRING" id="198804.BUsg_426"/>
<dbReference type="GeneID" id="93003898"/>
<dbReference type="KEGG" id="bas:BUsg_426"/>
<dbReference type="eggNOG" id="COG0621">
    <property type="taxonomic scope" value="Bacteria"/>
</dbReference>
<dbReference type="HOGENOM" id="CLU_018697_2_0_6"/>
<dbReference type="Proteomes" id="UP000000416">
    <property type="component" value="Chromosome"/>
</dbReference>
<dbReference type="GO" id="GO:0005829">
    <property type="term" value="C:cytosol"/>
    <property type="evidence" value="ECO:0007669"/>
    <property type="project" value="TreeGrafter"/>
</dbReference>
<dbReference type="GO" id="GO:0051539">
    <property type="term" value="F:4 iron, 4 sulfur cluster binding"/>
    <property type="evidence" value="ECO:0007669"/>
    <property type="project" value="UniProtKB-UniRule"/>
</dbReference>
<dbReference type="GO" id="GO:0046872">
    <property type="term" value="F:metal ion binding"/>
    <property type="evidence" value="ECO:0007669"/>
    <property type="project" value="UniProtKB-KW"/>
</dbReference>
<dbReference type="GO" id="GO:0035597">
    <property type="term" value="F:N6-isopentenyladenosine methylthiotransferase activity"/>
    <property type="evidence" value="ECO:0007669"/>
    <property type="project" value="TreeGrafter"/>
</dbReference>
<dbReference type="CDD" id="cd01335">
    <property type="entry name" value="Radical_SAM"/>
    <property type="match status" value="1"/>
</dbReference>
<dbReference type="FunFam" id="3.40.50.12160:FF:000001">
    <property type="entry name" value="tRNA-2-methylthio-N(6)-dimethylallyladenosine synthase"/>
    <property type="match status" value="1"/>
</dbReference>
<dbReference type="FunFam" id="3.80.30.20:FF:000001">
    <property type="entry name" value="tRNA-2-methylthio-N(6)-dimethylallyladenosine synthase 2"/>
    <property type="match status" value="1"/>
</dbReference>
<dbReference type="Gene3D" id="3.40.50.12160">
    <property type="entry name" value="Methylthiotransferase, N-terminal domain"/>
    <property type="match status" value="1"/>
</dbReference>
<dbReference type="Gene3D" id="3.80.30.20">
    <property type="entry name" value="tm_1862 like domain"/>
    <property type="match status" value="1"/>
</dbReference>
<dbReference type="HAMAP" id="MF_01864">
    <property type="entry name" value="tRNA_metthiotr_MiaB"/>
    <property type="match status" value="1"/>
</dbReference>
<dbReference type="InterPro" id="IPR006638">
    <property type="entry name" value="Elp3/MiaA/NifB-like_rSAM"/>
</dbReference>
<dbReference type="InterPro" id="IPR005839">
    <property type="entry name" value="Methylthiotransferase"/>
</dbReference>
<dbReference type="InterPro" id="IPR020612">
    <property type="entry name" value="Methylthiotransferase_CS"/>
</dbReference>
<dbReference type="InterPro" id="IPR013848">
    <property type="entry name" value="Methylthiotransferase_N"/>
</dbReference>
<dbReference type="InterPro" id="IPR038135">
    <property type="entry name" value="Methylthiotransferase_N_sf"/>
</dbReference>
<dbReference type="InterPro" id="IPR006463">
    <property type="entry name" value="MiaB_methiolase"/>
</dbReference>
<dbReference type="InterPro" id="IPR007197">
    <property type="entry name" value="rSAM"/>
</dbReference>
<dbReference type="InterPro" id="IPR023404">
    <property type="entry name" value="rSAM_horseshoe"/>
</dbReference>
<dbReference type="InterPro" id="IPR002792">
    <property type="entry name" value="TRAM_dom"/>
</dbReference>
<dbReference type="NCBIfam" id="TIGR01574">
    <property type="entry name" value="miaB-methiolase"/>
    <property type="match status" value="1"/>
</dbReference>
<dbReference type="NCBIfam" id="TIGR00089">
    <property type="entry name" value="MiaB/RimO family radical SAM methylthiotransferase"/>
    <property type="match status" value="1"/>
</dbReference>
<dbReference type="PANTHER" id="PTHR43020">
    <property type="entry name" value="CDK5 REGULATORY SUBUNIT-ASSOCIATED PROTEIN 1"/>
    <property type="match status" value="1"/>
</dbReference>
<dbReference type="PANTHER" id="PTHR43020:SF2">
    <property type="entry name" value="MITOCHONDRIAL TRNA METHYLTHIOTRANSFERASE CDK5RAP1"/>
    <property type="match status" value="1"/>
</dbReference>
<dbReference type="Pfam" id="PF04055">
    <property type="entry name" value="Radical_SAM"/>
    <property type="match status" value="1"/>
</dbReference>
<dbReference type="Pfam" id="PF01938">
    <property type="entry name" value="TRAM"/>
    <property type="match status" value="1"/>
</dbReference>
<dbReference type="Pfam" id="PF00919">
    <property type="entry name" value="UPF0004"/>
    <property type="match status" value="1"/>
</dbReference>
<dbReference type="SFLD" id="SFLDF00273">
    <property type="entry name" value="(dimethylallyl)adenosine_tRNA"/>
    <property type="match status" value="1"/>
</dbReference>
<dbReference type="SFLD" id="SFLDG01082">
    <property type="entry name" value="B12-binding_domain_containing"/>
    <property type="match status" value="1"/>
</dbReference>
<dbReference type="SFLD" id="SFLDG01061">
    <property type="entry name" value="methylthiotransferase"/>
    <property type="match status" value="1"/>
</dbReference>
<dbReference type="SMART" id="SM00729">
    <property type="entry name" value="Elp3"/>
    <property type="match status" value="1"/>
</dbReference>
<dbReference type="SUPFAM" id="SSF102114">
    <property type="entry name" value="Radical SAM enzymes"/>
    <property type="match status" value="1"/>
</dbReference>
<dbReference type="PROSITE" id="PS51449">
    <property type="entry name" value="MTTASE_N"/>
    <property type="match status" value="1"/>
</dbReference>
<dbReference type="PROSITE" id="PS01278">
    <property type="entry name" value="MTTASE_RADICAL"/>
    <property type="match status" value="1"/>
</dbReference>
<dbReference type="PROSITE" id="PS51918">
    <property type="entry name" value="RADICAL_SAM"/>
    <property type="match status" value="1"/>
</dbReference>
<dbReference type="PROSITE" id="PS50926">
    <property type="entry name" value="TRAM"/>
    <property type="match status" value="1"/>
</dbReference>
<proteinExistence type="inferred from homology"/>
<sequence>MKYIYIKTWGCQMNEYDSSMITVFLEKTGRYLITKEVEKADILILNTCSIREKAQEKVFHQLGRWKKLKNKKPDVIIAVGGCVATQEGKEIFKRANYVDIVFGTQTLHKLAQMIDKVEKNRRFMIDISFPQLEKFNYSLEPKKTGYTASISIMEGCNKYCSFCVVPYTRGHEISRPSDDILLEISILAENGVREINLLGQNVNAYRGRTFNGKICFFSELLRLVSEIDGIDRIRFTTSNPLEFTDDIIEVYQDTPKLVSFLHLPVQSGSNRILQLMKRSYTTEEYEKIIEKLILARSNIQISSDFIVGFPSESEEDFQKTINFIKKINFDMSFSFIYSSRPGTPASEMKDNIDLQEKKKRLYTLQNCINKQTMSWSRKMLKSTQSVLVEGVSKKNIMELYGKTENNRIVTFKGSHKMIGKFIKLKIKKVHTHSLQGELI</sequence>
<reference key="1">
    <citation type="journal article" date="2002" name="Science">
        <title>50 million years of genomic stasis in endosymbiotic bacteria.</title>
        <authorList>
            <person name="Tamas I."/>
            <person name="Klasson L."/>
            <person name="Canbaeck B."/>
            <person name="Naeslund A.K."/>
            <person name="Eriksson A.-S."/>
            <person name="Wernegreen J.J."/>
            <person name="Sandstroem J.P."/>
            <person name="Moran N.A."/>
            <person name="Andersson S.G.E."/>
        </authorList>
    </citation>
    <scope>NUCLEOTIDE SEQUENCE [LARGE SCALE GENOMIC DNA]</scope>
    <source>
        <strain>Sg</strain>
    </source>
</reference>
<gene>
    <name evidence="1" type="primary">miaB</name>
    <name type="ordered locus">BUsg_426</name>
</gene>
<name>MIAB_BUCAP</name>
<accession>Q8K9C2</accession>
<comment type="function">
    <text evidence="1">Catalyzes the methylthiolation of N6-(dimethylallyl)adenosine (i(6)A), leading to the formation of 2-methylthio-N6-(dimethylallyl)adenosine (ms(2)i(6)A) at position 37 in tRNAs that read codons beginning with uridine.</text>
</comment>
<comment type="catalytic activity">
    <reaction evidence="1">
        <text>N(6)-dimethylallyladenosine(37) in tRNA + (sulfur carrier)-SH + AH2 + 2 S-adenosyl-L-methionine = 2-methylsulfanyl-N(6)-dimethylallyladenosine(37) in tRNA + (sulfur carrier)-H + 5'-deoxyadenosine + L-methionine + A + S-adenosyl-L-homocysteine + 2 H(+)</text>
        <dbReference type="Rhea" id="RHEA:37067"/>
        <dbReference type="Rhea" id="RHEA-COMP:10375"/>
        <dbReference type="Rhea" id="RHEA-COMP:10376"/>
        <dbReference type="Rhea" id="RHEA-COMP:14737"/>
        <dbReference type="Rhea" id="RHEA-COMP:14739"/>
        <dbReference type="ChEBI" id="CHEBI:13193"/>
        <dbReference type="ChEBI" id="CHEBI:15378"/>
        <dbReference type="ChEBI" id="CHEBI:17319"/>
        <dbReference type="ChEBI" id="CHEBI:17499"/>
        <dbReference type="ChEBI" id="CHEBI:29917"/>
        <dbReference type="ChEBI" id="CHEBI:57844"/>
        <dbReference type="ChEBI" id="CHEBI:57856"/>
        <dbReference type="ChEBI" id="CHEBI:59789"/>
        <dbReference type="ChEBI" id="CHEBI:64428"/>
        <dbReference type="ChEBI" id="CHEBI:74415"/>
        <dbReference type="ChEBI" id="CHEBI:74417"/>
        <dbReference type="EC" id="2.8.4.3"/>
    </reaction>
</comment>
<comment type="cofactor">
    <cofactor evidence="1">
        <name>[4Fe-4S] cluster</name>
        <dbReference type="ChEBI" id="CHEBI:49883"/>
    </cofactor>
    <text evidence="1">Binds 2 [4Fe-4S] clusters. One cluster is coordinated with 3 cysteines and an exchangeable S-adenosyl-L-methionine.</text>
</comment>
<comment type="subunit">
    <text evidence="1">Monomer.</text>
</comment>
<comment type="subcellular location">
    <subcellularLocation>
        <location evidence="1">Cytoplasm</location>
    </subcellularLocation>
</comment>
<comment type="similarity">
    <text evidence="1">Belongs to the methylthiotransferase family. MiaB subfamily.</text>
</comment>
<keyword id="KW-0004">4Fe-4S</keyword>
<keyword id="KW-0963">Cytoplasm</keyword>
<keyword id="KW-0408">Iron</keyword>
<keyword id="KW-0411">Iron-sulfur</keyword>
<keyword id="KW-0479">Metal-binding</keyword>
<keyword id="KW-0949">S-adenosyl-L-methionine</keyword>
<keyword id="KW-0808">Transferase</keyword>
<keyword id="KW-0819">tRNA processing</keyword>
<feature type="chain" id="PRO_0000141731" description="tRNA-2-methylthio-N(6)-dimethylallyladenosine synthase">
    <location>
        <begin position="1"/>
        <end position="439"/>
    </location>
</feature>
<feature type="domain" description="MTTase N-terminal" evidence="1">
    <location>
        <begin position="2"/>
        <end position="119"/>
    </location>
</feature>
<feature type="domain" description="Radical SAM core" evidence="2">
    <location>
        <begin position="142"/>
        <end position="374"/>
    </location>
</feature>
<feature type="domain" description="TRAM" evidence="1">
    <location>
        <begin position="377"/>
        <end position="439"/>
    </location>
</feature>
<feature type="binding site" evidence="1">
    <location>
        <position position="11"/>
    </location>
    <ligand>
        <name>[4Fe-4S] cluster</name>
        <dbReference type="ChEBI" id="CHEBI:49883"/>
        <label>1</label>
    </ligand>
</feature>
<feature type="binding site" evidence="1">
    <location>
        <position position="48"/>
    </location>
    <ligand>
        <name>[4Fe-4S] cluster</name>
        <dbReference type="ChEBI" id="CHEBI:49883"/>
        <label>1</label>
    </ligand>
</feature>
<feature type="binding site" evidence="1">
    <location>
        <position position="82"/>
    </location>
    <ligand>
        <name>[4Fe-4S] cluster</name>
        <dbReference type="ChEBI" id="CHEBI:49883"/>
        <label>1</label>
    </ligand>
</feature>
<feature type="binding site" evidence="1">
    <location>
        <position position="156"/>
    </location>
    <ligand>
        <name>[4Fe-4S] cluster</name>
        <dbReference type="ChEBI" id="CHEBI:49883"/>
        <label>2</label>
        <note>4Fe-4S-S-AdoMet</note>
    </ligand>
</feature>
<feature type="binding site" evidence="1">
    <location>
        <position position="160"/>
    </location>
    <ligand>
        <name>[4Fe-4S] cluster</name>
        <dbReference type="ChEBI" id="CHEBI:49883"/>
        <label>2</label>
        <note>4Fe-4S-S-AdoMet</note>
    </ligand>
</feature>
<feature type="binding site" evidence="1">
    <location>
        <position position="163"/>
    </location>
    <ligand>
        <name>[4Fe-4S] cluster</name>
        <dbReference type="ChEBI" id="CHEBI:49883"/>
        <label>2</label>
        <note>4Fe-4S-S-AdoMet</note>
    </ligand>
</feature>
<evidence type="ECO:0000255" key="1">
    <source>
        <dbReference type="HAMAP-Rule" id="MF_01864"/>
    </source>
</evidence>
<evidence type="ECO:0000255" key="2">
    <source>
        <dbReference type="PROSITE-ProRule" id="PRU01266"/>
    </source>
</evidence>
<protein>
    <recommendedName>
        <fullName evidence="1">tRNA-2-methylthio-N(6)-dimethylallyladenosine synthase</fullName>
        <ecNumber evidence="1">2.8.4.3</ecNumber>
    </recommendedName>
    <alternativeName>
        <fullName evidence="1">(Dimethylallyl)adenosine tRNA methylthiotransferase MiaB</fullName>
    </alternativeName>
    <alternativeName>
        <fullName evidence="1">tRNA-i(6)A37 methylthiotransferase</fullName>
    </alternativeName>
</protein>